<name>EFTU_MYCPA</name>
<sequence>MAKAKFERTKPHVNIGTIGHVDHGKTTLTAAITKVLHDKYPDLNESRAFDQIDNAPEERQRGITINISHVEYQTDKRHYAHVDAPGHADYIKNMITGAAQMDGAILVVAATDGPMPQTREHVLLARQVGVPYILVALNKADMVDDEELLELVEMEVRELLAAQEFDEDAPVVRVSALKALEGDAKWVESVEQLMEAVDESIPDPVRETDKPFLMPVEDVFTITGRGTVVTGRVERGVINVNEEVEIVGIRPSSTKTTVTGVEMFRKLLDQGQAGDNVGLLLRGIKREDVERGQVVTKPGTTTPHTEFEGQVYILSKDEGGRHTPFFNNYRPQFYFRTTDVTGVVTLPEGTEMVMPGDNTNISVKLIQPVAMDEGLRFAIREGGRTVGAGRVVKIIK</sequence>
<dbReference type="EC" id="3.6.5.3" evidence="2"/>
<dbReference type="EMBL" id="AE016958">
    <property type="protein sequence ID" value="AAS06693.1"/>
    <property type="molecule type" value="Genomic_DNA"/>
</dbReference>
<dbReference type="RefSeq" id="WP_003873538.1">
    <property type="nucleotide sequence ID" value="NZ_CP106873.1"/>
</dbReference>
<dbReference type="SMR" id="Q73SD1"/>
<dbReference type="STRING" id="262316.MAP_4143"/>
<dbReference type="GeneID" id="75272003"/>
<dbReference type="KEGG" id="mpa:MAP_4143"/>
<dbReference type="eggNOG" id="COG0050">
    <property type="taxonomic scope" value="Bacteria"/>
</dbReference>
<dbReference type="HOGENOM" id="CLU_007265_0_1_11"/>
<dbReference type="Proteomes" id="UP000000580">
    <property type="component" value="Chromosome"/>
</dbReference>
<dbReference type="GO" id="GO:0005829">
    <property type="term" value="C:cytosol"/>
    <property type="evidence" value="ECO:0007669"/>
    <property type="project" value="TreeGrafter"/>
</dbReference>
<dbReference type="GO" id="GO:0005525">
    <property type="term" value="F:GTP binding"/>
    <property type="evidence" value="ECO:0007669"/>
    <property type="project" value="UniProtKB-UniRule"/>
</dbReference>
<dbReference type="GO" id="GO:0003924">
    <property type="term" value="F:GTPase activity"/>
    <property type="evidence" value="ECO:0007669"/>
    <property type="project" value="InterPro"/>
</dbReference>
<dbReference type="GO" id="GO:0003746">
    <property type="term" value="F:translation elongation factor activity"/>
    <property type="evidence" value="ECO:0007669"/>
    <property type="project" value="UniProtKB-UniRule"/>
</dbReference>
<dbReference type="CDD" id="cd01884">
    <property type="entry name" value="EF_Tu"/>
    <property type="match status" value="1"/>
</dbReference>
<dbReference type="CDD" id="cd03697">
    <property type="entry name" value="EFTU_II"/>
    <property type="match status" value="1"/>
</dbReference>
<dbReference type="CDD" id="cd03707">
    <property type="entry name" value="EFTU_III"/>
    <property type="match status" value="1"/>
</dbReference>
<dbReference type="FunFam" id="2.40.30.10:FF:000001">
    <property type="entry name" value="Elongation factor Tu"/>
    <property type="match status" value="1"/>
</dbReference>
<dbReference type="FunFam" id="3.40.50.300:FF:000003">
    <property type="entry name" value="Elongation factor Tu"/>
    <property type="match status" value="1"/>
</dbReference>
<dbReference type="Gene3D" id="3.40.50.300">
    <property type="entry name" value="P-loop containing nucleotide triphosphate hydrolases"/>
    <property type="match status" value="1"/>
</dbReference>
<dbReference type="Gene3D" id="2.40.30.10">
    <property type="entry name" value="Translation factors"/>
    <property type="match status" value="2"/>
</dbReference>
<dbReference type="HAMAP" id="MF_00118_B">
    <property type="entry name" value="EF_Tu_B"/>
    <property type="match status" value="1"/>
</dbReference>
<dbReference type="InterPro" id="IPR041709">
    <property type="entry name" value="EF-Tu_GTP-bd"/>
</dbReference>
<dbReference type="InterPro" id="IPR050055">
    <property type="entry name" value="EF-Tu_GTPase"/>
</dbReference>
<dbReference type="InterPro" id="IPR004161">
    <property type="entry name" value="EFTu-like_2"/>
</dbReference>
<dbReference type="InterPro" id="IPR033720">
    <property type="entry name" value="EFTU_2"/>
</dbReference>
<dbReference type="InterPro" id="IPR031157">
    <property type="entry name" value="G_TR_CS"/>
</dbReference>
<dbReference type="InterPro" id="IPR027417">
    <property type="entry name" value="P-loop_NTPase"/>
</dbReference>
<dbReference type="InterPro" id="IPR005225">
    <property type="entry name" value="Small_GTP-bd"/>
</dbReference>
<dbReference type="InterPro" id="IPR000795">
    <property type="entry name" value="T_Tr_GTP-bd_dom"/>
</dbReference>
<dbReference type="InterPro" id="IPR009000">
    <property type="entry name" value="Transl_B-barrel_sf"/>
</dbReference>
<dbReference type="InterPro" id="IPR009001">
    <property type="entry name" value="Transl_elong_EF1A/Init_IF2_C"/>
</dbReference>
<dbReference type="InterPro" id="IPR004541">
    <property type="entry name" value="Transl_elong_EFTu/EF1A_bac/org"/>
</dbReference>
<dbReference type="InterPro" id="IPR004160">
    <property type="entry name" value="Transl_elong_EFTu/EF1A_C"/>
</dbReference>
<dbReference type="NCBIfam" id="TIGR00485">
    <property type="entry name" value="EF-Tu"/>
    <property type="match status" value="1"/>
</dbReference>
<dbReference type="NCBIfam" id="NF000766">
    <property type="entry name" value="PRK00049.1"/>
    <property type="match status" value="1"/>
</dbReference>
<dbReference type="NCBIfam" id="NF009372">
    <property type="entry name" value="PRK12735.1"/>
    <property type="match status" value="1"/>
</dbReference>
<dbReference type="NCBIfam" id="NF009373">
    <property type="entry name" value="PRK12736.1"/>
    <property type="match status" value="1"/>
</dbReference>
<dbReference type="NCBIfam" id="TIGR00231">
    <property type="entry name" value="small_GTP"/>
    <property type="match status" value="1"/>
</dbReference>
<dbReference type="PANTHER" id="PTHR43721:SF22">
    <property type="entry name" value="ELONGATION FACTOR TU, MITOCHONDRIAL"/>
    <property type="match status" value="1"/>
</dbReference>
<dbReference type="PANTHER" id="PTHR43721">
    <property type="entry name" value="ELONGATION FACTOR TU-RELATED"/>
    <property type="match status" value="1"/>
</dbReference>
<dbReference type="Pfam" id="PF00009">
    <property type="entry name" value="GTP_EFTU"/>
    <property type="match status" value="1"/>
</dbReference>
<dbReference type="Pfam" id="PF03144">
    <property type="entry name" value="GTP_EFTU_D2"/>
    <property type="match status" value="1"/>
</dbReference>
<dbReference type="Pfam" id="PF03143">
    <property type="entry name" value="GTP_EFTU_D3"/>
    <property type="match status" value="1"/>
</dbReference>
<dbReference type="PRINTS" id="PR00315">
    <property type="entry name" value="ELONGATNFCT"/>
</dbReference>
<dbReference type="SUPFAM" id="SSF50465">
    <property type="entry name" value="EF-Tu/eEF-1alpha/eIF2-gamma C-terminal domain"/>
    <property type="match status" value="1"/>
</dbReference>
<dbReference type="SUPFAM" id="SSF52540">
    <property type="entry name" value="P-loop containing nucleoside triphosphate hydrolases"/>
    <property type="match status" value="1"/>
</dbReference>
<dbReference type="SUPFAM" id="SSF50447">
    <property type="entry name" value="Translation proteins"/>
    <property type="match status" value="1"/>
</dbReference>
<dbReference type="PROSITE" id="PS00301">
    <property type="entry name" value="G_TR_1"/>
    <property type="match status" value="1"/>
</dbReference>
<dbReference type="PROSITE" id="PS51722">
    <property type="entry name" value="G_TR_2"/>
    <property type="match status" value="1"/>
</dbReference>
<reference key="1">
    <citation type="journal article" date="2005" name="Proc. Natl. Acad. Sci. U.S.A.">
        <title>The complete genome sequence of Mycobacterium avium subspecies paratuberculosis.</title>
        <authorList>
            <person name="Li L."/>
            <person name="Bannantine J.P."/>
            <person name="Zhang Q."/>
            <person name="Amonsin A."/>
            <person name="May B.J."/>
            <person name="Alt D."/>
            <person name="Banerji N."/>
            <person name="Kanjilal S."/>
            <person name="Kapur V."/>
        </authorList>
    </citation>
    <scope>NUCLEOTIDE SEQUENCE [LARGE SCALE GENOMIC DNA]</scope>
    <source>
        <strain>ATCC BAA-968 / K-10</strain>
    </source>
</reference>
<comment type="function">
    <text evidence="2">GTP hydrolase that promotes the GTP-dependent binding of aminoacyl-tRNA to the A-site of ribosomes during protein biosynthesis.</text>
</comment>
<comment type="catalytic activity">
    <reaction evidence="2">
        <text>GTP + H2O = GDP + phosphate + H(+)</text>
        <dbReference type="Rhea" id="RHEA:19669"/>
        <dbReference type="ChEBI" id="CHEBI:15377"/>
        <dbReference type="ChEBI" id="CHEBI:15378"/>
        <dbReference type="ChEBI" id="CHEBI:37565"/>
        <dbReference type="ChEBI" id="CHEBI:43474"/>
        <dbReference type="ChEBI" id="CHEBI:58189"/>
        <dbReference type="EC" id="3.6.5.3"/>
    </reaction>
    <physiologicalReaction direction="left-to-right" evidence="2">
        <dbReference type="Rhea" id="RHEA:19670"/>
    </physiologicalReaction>
</comment>
<comment type="subunit">
    <text evidence="2">Monomer.</text>
</comment>
<comment type="subcellular location">
    <subcellularLocation>
        <location evidence="2">Cytoplasm</location>
    </subcellularLocation>
</comment>
<comment type="similarity">
    <text evidence="2">Belongs to the TRAFAC class translation factor GTPase superfamily. Classic translation factor GTPase family. EF-Tu/EF-1A subfamily.</text>
</comment>
<protein>
    <recommendedName>
        <fullName evidence="2">Elongation factor Tu</fullName>
        <shortName evidence="2">EF-Tu</shortName>
        <ecNumber evidence="2">3.6.5.3</ecNumber>
    </recommendedName>
</protein>
<gene>
    <name evidence="2" type="primary">tuf</name>
    <name type="ordered locus">MAP_4143</name>
</gene>
<organism>
    <name type="scientific">Mycolicibacterium paratuberculosis (strain ATCC BAA-968 / K-10)</name>
    <name type="common">Mycobacterium paratuberculosis</name>
    <dbReference type="NCBI Taxonomy" id="262316"/>
    <lineage>
        <taxon>Bacteria</taxon>
        <taxon>Bacillati</taxon>
        <taxon>Actinomycetota</taxon>
        <taxon>Actinomycetes</taxon>
        <taxon>Mycobacteriales</taxon>
        <taxon>Mycobacteriaceae</taxon>
        <taxon>Mycobacterium</taxon>
        <taxon>Mycobacterium avium complex (MAC)</taxon>
    </lineage>
</organism>
<proteinExistence type="inferred from homology"/>
<accession>Q73SD1</accession>
<keyword id="KW-0963">Cytoplasm</keyword>
<keyword id="KW-0251">Elongation factor</keyword>
<keyword id="KW-0342">GTP-binding</keyword>
<keyword id="KW-0378">Hydrolase</keyword>
<keyword id="KW-0460">Magnesium</keyword>
<keyword id="KW-0479">Metal-binding</keyword>
<keyword id="KW-0547">Nucleotide-binding</keyword>
<keyword id="KW-0648">Protein biosynthesis</keyword>
<keyword id="KW-1185">Reference proteome</keyword>
<evidence type="ECO:0000250" key="1"/>
<evidence type="ECO:0000255" key="2">
    <source>
        <dbReference type="HAMAP-Rule" id="MF_00118"/>
    </source>
</evidence>
<feature type="chain" id="PRO_1000015701" description="Elongation factor Tu">
    <location>
        <begin position="1"/>
        <end position="396"/>
    </location>
</feature>
<feature type="domain" description="tr-type G">
    <location>
        <begin position="10"/>
        <end position="205"/>
    </location>
</feature>
<feature type="region of interest" description="G1" evidence="1">
    <location>
        <begin position="19"/>
        <end position="26"/>
    </location>
</feature>
<feature type="region of interest" description="G2" evidence="1">
    <location>
        <begin position="62"/>
        <end position="66"/>
    </location>
</feature>
<feature type="region of interest" description="G3" evidence="1">
    <location>
        <begin position="83"/>
        <end position="86"/>
    </location>
</feature>
<feature type="region of interest" description="G4" evidence="1">
    <location>
        <begin position="138"/>
        <end position="141"/>
    </location>
</feature>
<feature type="region of interest" description="G5" evidence="1">
    <location>
        <begin position="175"/>
        <end position="177"/>
    </location>
</feature>
<feature type="binding site" evidence="2">
    <location>
        <begin position="19"/>
        <end position="26"/>
    </location>
    <ligand>
        <name>GTP</name>
        <dbReference type="ChEBI" id="CHEBI:37565"/>
    </ligand>
</feature>
<feature type="binding site" evidence="2">
    <location>
        <position position="26"/>
    </location>
    <ligand>
        <name>Mg(2+)</name>
        <dbReference type="ChEBI" id="CHEBI:18420"/>
    </ligand>
</feature>
<feature type="binding site" evidence="2">
    <location>
        <begin position="83"/>
        <end position="87"/>
    </location>
    <ligand>
        <name>GTP</name>
        <dbReference type="ChEBI" id="CHEBI:37565"/>
    </ligand>
</feature>
<feature type="binding site" evidence="2">
    <location>
        <begin position="138"/>
        <end position="141"/>
    </location>
    <ligand>
        <name>GTP</name>
        <dbReference type="ChEBI" id="CHEBI:37565"/>
    </ligand>
</feature>